<name>E4PD_SHEPC</name>
<accession>A4Y3R9</accession>
<reference key="1">
    <citation type="submission" date="2007-04" db="EMBL/GenBank/DDBJ databases">
        <title>Complete sequence of Shewanella putrefaciens CN-32.</title>
        <authorList>
            <consortium name="US DOE Joint Genome Institute"/>
            <person name="Copeland A."/>
            <person name="Lucas S."/>
            <person name="Lapidus A."/>
            <person name="Barry K."/>
            <person name="Detter J.C."/>
            <person name="Glavina del Rio T."/>
            <person name="Hammon N."/>
            <person name="Israni S."/>
            <person name="Dalin E."/>
            <person name="Tice H."/>
            <person name="Pitluck S."/>
            <person name="Chain P."/>
            <person name="Malfatti S."/>
            <person name="Shin M."/>
            <person name="Vergez L."/>
            <person name="Schmutz J."/>
            <person name="Larimer F."/>
            <person name="Land M."/>
            <person name="Hauser L."/>
            <person name="Kyrpides N."/>
            <person name="Mikhailova N."/>
            <person name="Romine M.F."/>
            <person name="Fredrickson J."/>
            <person name="Tiedje J."/>
            <person name="Richardson P."/>
        </authorList>
    </citation>
    <scope>NUCLEOTIDE SEQUENCE [LARGE SCALE GENOMIC DNA]</scope>
    <source>
        <strain>CN-32 / ATCC BAA-453</strain>
    </source>
</reference>
<gene>
    <name evidence="1" type="primary">epd</name>
    <name type="ordered locus">Sputcn32_0873</name>
</gene>
<dbReference type="EC" id="1.2.1.72" evidence="1"/>
<dbReference type="EMBL" id="CP000681">
    <property type="protein sequence ID" value="ABP74602.1"/>
    <property type="molecule type" value="Genomic_DNA"/>
</dbReference>
<dbReference type="SMR" id="A4Y3R9"/>
<dbReference type="STRING" id="319224.Sputcn32_0873"/>
<dbReference type="KEGG" id="spc:Sputcn32_0873"/>
<dbReference type="eggNOG" id="COG0057">
    <property type="taxonomic scope" value="Bacteria"/>
</dbReference>
<dbReference type="HOGENOM" id="CLU_030140_0_0_6"/>
<dbReference type="UniPathway" id="UPA00244">
    <property type="reaction ID" value="UER00309"/>
</dbReference>
<dbReference type="GO" id="GO:0005737">
    <property type="term" value="C:cytoplasm"/>
    <property type="evidence" value="ECO:0007669"/>
    <property type="project" value="UniProtKB-SubCell"/>
</dbReference>
<dbReference type="GO" id="GO:0048001">
    <property type="term" value="F:erythrose-4-phosphate dehydrogenase activity"/>
    <property type="evidence" value="ECO:0007669"/>
    <property type="project" value="UniProtKB-UniRule"/>
</dbReference>
<dbReference type="GO" id="GO:0051287">
    <property type="term" value="F:NAD binding"/>
    <property type="evidence" value="ECO:0007669"/>
    <property type="project" value="InterPro"/>
</dbReference>
<dbReference type="GO" id="GO:0042823">
    <property type="term" value="P:pyridoxal phosphate biosynthetic process"/>
    <property type="evidence" value="ECO:0007669"/>
    <property type="project" value="UniProtKB-UniRule"/>
</dbReference>
<dbReference type="GO" id="GO:0008615">
    <property type="term" value="P:pyridoxine biosynthetic process"/>
    <property type="evidence" value="ECO:0007669"/>
    <property type="project" value="UniProtKB-UniRule"/>
</dbReference>
<dbReference type="CDD" id="cd23937">
    <property type="entry name" value="GAPDH_C_E4PDH"/>
    <property type="match status" value="1"/>
</dbReference>
<dbReference type="CDD" id="cd17892">
    <property type="entry name" value="GAPDH_N_E4PDH"/>
    <property type="match status" value="1"/>
</dbReference>
<dbReference type="FunFam" id="3.30.360.10:FF:000007">
    <property type="entry name" value="D-erythrose-4-phosphate dehydrogenase"/>
    <property type="match status" value="1"/>
</dbReference>
<dbReference type="FunFam" id="3.40.50.720:FF:000001">
    <property type="entry name" value="Glyceraldehyde-3-phosphate dehydrogenase"/>
    <property type="match status" value="1"/>
</dbReference>
<dbReference type="Gene3D" id="3.30.360.10">
    <property type="entry name" value="Dihydrodipicolinate Reductase, domain 2"/>
    <property type="match status" value="1"/>
</dbReference>
<dbReference type="Gene3D" id="3.40.50.720">
    <property type="entry name" value="NAD(P)-binding Rossmann-like Domain"/>
    <property type="match status" value="1"/>
</dbReference>
<dbReference type="HAMAP" id="MF_01640">
    <property type="entry name" value="E4P_dehydrog"/>
    <property type="match status" value="1"/>
</dbReference>
<dbReference type="InterPro" id="IPR006422">
    <property type="entry name" value="E4P_DH_bac"/>
</dbReference>
<dbReference type="InterPro" id="IPR020831">
    <property type="entry name" value="GlycerAld/Erythrose_P_DH"/>
</dbReference>
<dbReference type="InterPro" id="IPR020830">
    <property type="entry name" value="GlycerAld_3-P_DH_AS"/>
</dbReference>
<dbReference type="InterPro" id="IPR020829">
    <property type="entry name" value="GlycerAld_3-P_DH_cat"/>
</dbReference>
<dbReference type="InterPro" id="IPR020828">
    <property type="entry name" value="GlycerAld_3-P_DH_NAD(P)-bd"/>
</dbReference>
<dbReference type="InterPro" id="IPR036291">
    <property type="entry name" value="NAD(P)-bd_dom_sf"/>
</dbReference>
<dbReference type="NCBIfam" id="TIGR01532">
    <property type="entry name" value="E4PD_g-proteo"/>
    <property type="match status" value="1"/>
</dbReference>
<dbReference type="NCBIfam" id="NF010058">
    <property type="entry name" value="PRK13535.1"/>
    <property type="match status" value="1"/>
</dbReference>
<dbReference type="PANTHER" id="PTHR43148">
    <property type="entry name" value="GLYCERALDEHYDE-3-PHOSPHATE DEHYDROGENASE 2"/>
    <property type="match status" value="1"/>
</dbReference>
<dbReference type="Pfam" id="PF02800">
    <property type="entry name" value="Gp_dh_C"/>
    <property type="match status" value="1"/>
</dbReference>
<dbReference type="Pfam" id="PF00044">
    <property type="entry name" value="Gp_dh_N"/>
    <property type="match status" value="1"/>
</dbReference>
<dbReference type="PIRSF" id="PIRSF000149">
    <property type="entry name" value="GAP_DH"/>
    <property type="match status" value="1"/>
</dbReference>
<dbReference type="PRINTS" id="PR00078">
    <property type="entry name" value="G3PDHDRGNASE"/>
</dbReference>
<dbReference type="SMART" id="SM00846">
    <property type="entry name" value="Gp_dh_N"/>
    <property type="match status" value="1"/>
</dbReference>
<dbReference type="SUPFAM" id="SSF55347">
    <property type="entry name" value="Glyceraldehyde-3-phosphate dehydrogenase-like, C-terminal domain"/>
    <property type="match status" value="1"/>
</dbReference>
<dbReference type="SUPFAM" id="SSF51735">
    <property type="entry name" value="NAD(P)-binding Rossmann-fold domains"/>
    <property type="match status" value="1"/>
</dbReference>
<dbReference type="PROSITE" id="PS00071">
    <property type="entry name" value="GAPDH"/>
    <property type="match status" value="1"/>
</dbReference>
<organism>
    <name type="scientific">Shewanella putrefaciens (strain CN-32 / ATCC BAA-453)</name>
    <dbReference type="NCBI Taxonomy" id="319224"/>
    <lineage>
        <taxon>Bacteria</taxon>
        <taxon>Pseudomonadati</taxon>
        <taxon>Pseudomonadota</taxon>
        <taxon>Gammaproteobacteria</taxon>
        <taxon>Alteromonadales</taxon>
        <taxon>Shewanellaceae</taxon>
        <taxon>Shewanella</taxon>
    </lineage>
</organism>
<comment type="function">
    <text evidence="1">Catalyzes the NAD-dependent conversion of D-erythrose 4-phosphate to 4-phosphoerythronate.</text>
</comment>
<comment type="catalytic activity">
    <reaction evidence="1">
        <text>D-erythrose 4-phosphate + NAD(+) + H2O = 4-phospho-D-erythronate + NADH + 2 H(+)</text>
        <dbReference type="Rhea" id="RHEA:12056"/>
        <dbReference type="ChEBI" id="CHEBI:15377"/>
        <dbReference type="ChEBI" id="CHEBI:15378"/>
        <dbReference type="ChEBI" id="CHEBI:16897"/>
        <dbReference type="ChEBI" id="CHEBI:57540"/>
        <dbReference type="ChEBI" id="CHEBI:57945"/>
        <dbReference type="ChEBI" id="CHEBI:58766"/>
        <dbReference type="EC" id="1.2.1.72"/>
    </reaction>
</comment>
<comment type="pathway">
    <text evidence="1">Cofactor biosynthesis; pyridoxine 5'-phosphate biosynthesis; pyridoxine 5'-phosphate from D-erythrose 4-phosphate: step 1/5.</text>
</comment>
<comment type="subunit">
    <text evidence="1">Homotetramer.</text>
</comment>
<comment type="subcellular location">
    <subcellularLocation>
        <location evidence="1">Cytoplasm</location>
    </subcellularLocation>
</comment>
<comment type="similarity">
    <text evidence="1">Belongs to the glyceraldehyde-3-phosphate dehydrogenase family. Epd subfamily.</text>
</comment>
<keyword id="KW-0963">Cytoplasm</keyword>
<keyword id="KW-0520">NAD</keyword>
<keyword id="KW-0560">Oxidoreductase</keyword>
<keyword id="KW-0664">Pyridoxine biosynthesis</keyword>
<protein>
    <recommendedName>
        <fullName evidence="1">D-erythrose-4-phosphate dehydrogenase</fullName>
        <shortName evidence="1">E4PDH</shortName>
        <ecNumber evidence="1">1.2.1.72</ecNumber>
    </recommendedName>
</protein>
<proteinExistence type="inferred from homology"/>
<sequence length="338" mass="37130">MIRVAINGYGRIGRSILRALYESGKRQQIQIVAINELAKPEAIIHLTQYDTTHGRFQHKVKLVDNHMLIGDDAIKILHEPDAAKLPWREMDIDIVYEATGVILDRQSCEAHIHAGAKQVLISHPSSADVDGTIVYGVNHDLLRAGHTVVSNASCTTNCIVPVIDVLDKHFGVKSGAITTIHSAMNDQQVIDAYHDDLRRTRAAGQSIIPVDTKLARGIERILPHMKDKFEAISVRVPTINVTAIDLSVTLAKTVDIASVNQVLELAANGRFNGILGYTDEPLVSCDFNHDPRSSIVDGTQTRVSAGQLVKLLLWCDNEWGFANRMLDTSLAMIAAKQS</sequence>
<evidence type="ECO:0000255" key="1">
    <source>
        <dbReference type="HAMAP-Rule" id="MF_01640"/>
    </source>
</evidence>
<feature type="chain" id="PRO_1000069897" description="D-erythrose-4-phosphate dehydrogenase">
    <location>
        <begin position="1"/>
        <end position="338"/>
    </location>
</feature>
<feature type="active site" description="Nucleophile" evidence="1">
    <location>
        <position position="154"/>
    </location>
</feature>
<feature type="binding site" evidence="1">
    <location>
        <begin position="11"/>
        <end position="12"/>
    </location>
    <ligand>
        <name>NAD(+)</name>
        <dbReference type="ChEBI" id="CHEBI:57540"/>
    </ligand>
</feature>
<feature type="binding site" evidence="1">
    <location>
        <begin position="153"/>
        <end position="155"/>
    </location>
    <ligand>
        <name>substrate</name>
    </ligand>
</feature>
<feature type="binding site" evidence="1">
    <location>
        <position position="199"/>
    </location>
    <ligand>
        <name>substrate</name>
    </ligand>
</feature>
<feature type="binding site" evidence="1">
    <location>
        <begin position="212"/>
        <end position="213"/>
    </location>
    <ligand>
        <name>substrate</name>
    </ligand>
</feature>
<feature type="binding site" evidence="1">
    <location>
        <position position="235"/>
    </location>
    <ligand>
        <name>substrate</name>
    </ligand>
</feature>
<feature type="binding site" evidence="1">
    <location>
        <position position="317"/>
    </location>
    <ligand>
        <name>NAD(+)</name>
        <dbReference type="ChEBI" id="CHEBI:57540"/>
    </ligand>
</feature>
<feature type="site" description="Activates thiol group during catalysis" evidence="1">
    <location>
        <position position="181"/>
    </location>
</feature>